<organism>
    <name type="scientific">Yersinia pestis</name>
    <dbReference type="NCBI Taxonomy" id="632"/>
    <lineage>
        <taxon>Bacteria</taxon>
        <taxon>Pseudomonadati</taxon>
        <taxon>Pseudomonadota</taxon>
        <taxon>Gammaproteobacteria</taxon>
        <taxon>Enterobacterales</taxon>
        <taxon>Yersiniaceae</taxon>
        <taxon>Yersinia</taxon>
    </lineage>
</organism>
<sequence length="200" mass="22471">MAKFIQHIGLVAPLDAANVDTDAIIPKQFLQKVTRTGFGQHLFNDWRFLDDAGKVPNPDFVLNLPRYQGATILLARENFGCGSSREHAPWALTDFGFKVVIAPSFADIFYGNAFNNQLLPVTLSEADIDTLFQLVKENEGIEFVVDLEQQTVNAGGKSYAFEIDPFRRHCMINGLDSIGLTLQHEHNISAYEKQQPEFLR</sequence>
<gene>
    <name evidence="1" type="primary">leuD</name>
    <name type="ordered locus">YPO0530</name>
    <name type="ordered locus">y3648</name>
    <name type="ordered locus">YP_3652</name>
</gene>
<name>LEUD_YERPE</name>
<comment type="function">
    <text evidence="1">Catalyzes the isomerization between 2-isopropylmalate and 3-isopropylmalate, via the formation of 2-isopropylmaleate.</text>
</comment>
<comment type="catalytic activity">
    <reaction evidence="1">
        <text>(2R,3S)-3-isopropylmalate = (2S)-2-isopropylmalate</text>
        <dbReference type="Rhea" id="RHEA:32287"/>
        <dbReference type="ChEBI" id="CHEBI:1178"/>
        <dbReference type="ChEBI" id="CHEBI:35121"/>
        <dbReference type="EC" id="4.2.1.33"/>
    </reaction>
</comment>
<comment type="pathway">
    <text evidence="1">Amino-acid biosynthesis; L-leucine biosynthesis; L-leucine from 3-methyl-2-oxobutanoate: step 2/4.</text>
</comment>
<comment type="subunit">
    <text evidence="1">Heterodimer of LeuC and LeuD.</text>
</comment>
<comment type="similarity">
    <text evidence="1">Belongs to the LeuD family. LeuD type 1 subfamily.</text>
</comment>
<evidence type="ECO:0000255" key="1">
    <source>
        <dbReference type="HAMAP-Rule" id="MF_01031"/>
    </source>
</evidence>
<protein>
    <recommendedName>
        <fullName evidence="1">3-isopropylmalate dehydratase small subunit</fullName>
        <ecNumber evidence="1">4.2.1.33</ecNumber>
    </recommendedName>
    <alternativeName>
        <fullName evidence="1">Alpha-IPM isomerase</fullName>
        <shortName evidence="1">IPMI</shortName>
    </alternativeName>
    <alternativeName>
        <fullName evidence="1">Isopropylmalate isomerase</fullName>
    </alternativeName>
</protein>
<keyword id="KW-0028">Amino-acid biosynthesis</keyword>
<keyword id="KW-0100">Branched-chain amino acid biosynthesis</keyword>
<keyword id="KW-0432">Leucine biosynthesis</keyword>
<keyword id="KW-0456">Lyase</keyword>
<keyword id="KW-1185">Reference proteome</keyword>
<dbReference type="EC" id="4.2.1.33" evidence="1"/>
<dbReference type="EMBL" id="AL590842">
    <property type="protein sequence ID" value="CAL19210.1"/>
    <property type="molecule type" value="Genomic_DNA"/>
</dbReference>
<dbReference type="EMBL" id="AE009952">
    <property type="protein sequence ID" value="AAM87196.1"/>
    <property type="molecule type" value="Genomic_DNA"/>
</dbReference>
<dbReference type="EMBL" id="AE017042">
    <property type="protein sequence ID" value="AAS63800.1"/>
    <property type="molecule type" value="Genomic_DNA"/>
</dbReference>
<dbReference type="PIR" id="AH0065">
    <property type="entry name" value="AH0065"/>
</dbReference>
<dbReference type="RefSeq" id="WP_002210456.1">
    <property type="nucleotide sequence ID" value="NZ_WUCM01000024.1"/>
</dbReference>
<dbReference type="RefSeq" id="YP_002345602.1">
    <property type="nucleotide sequence ID" value="NC_003143.1"/>
</dbReference>
<dbReference type="SMR" id="Q8ZIH1"/>
<dbReference type="IntAct" id="Q8ZIH1">
    <property type="interactions" value="10"/>
</dbReference>
<dbReference type="STRING" id="214092.YPO0530"/>
<dbReference type="PaxDb" id="214092-YPO0530"/>
<dbReference type="DNASU" id="1148595"/>
<dbReference type="EnsemblBacteria" id="AAS63800">
    <property type="protein sequence ID" value="AAS63800"/>
    <property type="gene ID" value="YP_3652"/>
</dbReference>
<dbReference type="GeneID" id="57974082"/>
<dbReference type="KEGG" id="ype:YPO0530"/>
<dbReference type="KEGG" id="ypk:y3648"/>
<dbReference type="KEGG" id="ypm:YP_3652"/>
<dbReference type="PATRIC" id="fig|214092.21.peg.783"/>
<dbReference type="eggNOG" id="COG0066">
    <property type="taxonomic scope" value="Bacteria"/>
</dbReference>
<dbReference type="HOGENOM" id="CLU_081378_0_3_6"/>
<dbReference type="OMA" id="FGQHLFH"/>
<dbReference type="OrthoDB" id="9777465at2"/>
<dbReference type="UniPathway" id="UPA00048">
    <property type="reaction ID" value="UER00071"/>
</dbReference>
<dbReference type="Proteomes" id="UP000000815">
    <property type="component" value="Chromosome"/>
</dbReference>
<dbReference type="Proteomes" id="UP000001019">
    <property type="component" value="Chromosome"/>
</dbReference>
<dbReference type="Proteomes" id="UP000002490">
    <property type="component" value="Chromosome"/>
</dbReference>
<dbReference type="GO" id="GO:0009316">
    <property type="term" value="C:3-isopropylmalate dehydratase complex"/>
    <property type="evidence" value="ECO:0007669"/>
    <property type="project" value="InterPro"/>
</dbReference>
<dbReference type="GO" id="GO:0003861">
    <property type="term" value="F:3-isopropylmalate dehydratase activity"/>
    <property type="evidence" value="ECO:0007669"/>
    <property type="project" value="UniProtKB-UniRule"/>
</dbReference>
<dbReference type="GO" id="GO:0009098">
    <property type="term" value="P:L-leucine biosynthetic process"/>
    <property type="evidence" value="ECO:0007669"/>
    <property type="project" value="UniProtKB-UniRule"/>
</dbReference>
<dbReference type="CDD" id="cd01577">
    <property type="entry name" value="IPMI_Swivel"/>
    <property type="match status" value="1"/>
</dbReference>
<dbReference type="FunFam" id="3.20.19.10:FF:000003">
    <property type="entry name" value="3-isopropylmalate dehydratase small subunit"/>
    <property type="match status" value="1"/>
</dbReference>
<dbReference type="Gene3D" id="3.20.19.10">
    <property type="entry name" value="Aconitase, domain 4"/>
    <property type="match status" value="1"/>
</dbReference>
<dbReference type="HAMAP" id="MF_01031">
    <property type="entry name" value="LeuD_type1"/>
    <property type="match status" value="1"/>
</dbReference>
<dbReference type="InterPro" id="IPR004431">
    <property type="entry name" value="3-IsopropMal_deHydase_ssu"/>
</dbReference>
<dbReference type="InterPro" id="IPR015928">
    <property type="entry name" value="Aconitase/3IPM_dehydase_swvl"/>
</dbReference>
<dbReference type="InterPro" id="IPR000573">
    <property type="entry name" value="AconitaseA/IPMdHydase_ssu_swvl"/>
</dbReference>
<dbReference type="InterPro" id="IPR033940">
    <property type="entry name" value="IPMI_Swivel"/>
</dbReference>
<dbReference type="InterPro" id="IPR050075">
    <property type="entry name" value="LeuD"/>
</dbReference>
<dbReference type="NCBIfam" id="TIGR00171">
    <property type="entry name" value="leuD"/>
    <property type="match status" value="1"/>
</dbReference>
<dbReference type="NCBIfam" id="NF002458">
    <property type="entry name" value="PRK01641.1"/>
    <property type="match status" value="1"/>
</dbReference>
<dbReference type="PANTHER" id="PTHR43345:SF5">
    <property type="entry name" value="3-ISOPROPYLMALATE DEHYDRATASE SMALL SUBUNIT"/>
    <property type="match status" value="1"/>
</dbReference>
<dbReference type="PANTHER" id="PTHR43345">
    <property type="entry name" value="3-ISOPROPYLMALATE DEHYDRATASE SMALL SUBUNIT 2-RELATED-RELATED"/>
    <property type="match status" value="1"/>
</dbReference>
<dbReference type="Pfam" id="PF00694">
    <property type="entry name" value="Aconitase_C"/>
    <property type="match status" value="1"/>
</dbReference>
<dbReference type="SUPFAM" id="SSF52016">
    <property type="entry name" value="LeuD/IlvD-like"/>
    <property type="match status" value="1"/>
</dbReference>
<proteinExistence type="inferred from homology"/>
<feature type="chain" id="PRO_0000141917" description="3-isopropylmalate dehydratase small subunit">
    <location>
        <begin position="1"/>
        <end position="200"/>
    </location>
</feature>
<accession>Q8ZIH1</accession>
<accession>Q0WJD6</accession>
<reference key="1">
    <citation type="journal article" date="2001" name="Nature">
        <title>Genome sequence of Yersinia pestis, the causative agent of plague.</title>
        <authorList>
            <person name="Parkhill J."/>
            <person name="Wren B.W."/>
            <person name="Thomson N.R."/>
            <person name="Titball R.W."/>
            <person name="Holden M.T.G."/>
            <person name="Prentice M.B."/>
            <person name="Sebaihia M."/>
            <person name="James K.D."/>
            <person name="Churcher C.M."/>
            <person name="Mungall K.L."/>
            <person name="Baker S."/>
            <person name="Basham D."/>
            <person name="Bentley S.D."/>
            <person name="Brooks K."/>
            <person name="Cerdeno-Tarraga A.-M."/>
            <person name="Chillingworth T."/>
            <person name="Cronin A."/>
            <person name="Davies R.M."/>
            <person name="Davis P."/>
            <person name="Dougan G."/>
            <person name="Feltwell T."/>
            <person name="Hamlin N."/>
            <person name="Holroyd S."/>
            <person name="Jagels K."/>
            <person name="Karlyshev A.V."/>
            <person name="Leather S."/>
            <person name="Moule S."/>
            <person name="Oyston P.C.F."/>
            <person name="Quail M.A."/>
            <person name="Rutherford K.M."/>
            <person name="Simmonds M."/>
            <person name="Skelton J."/>
            <person name="Stevens K."/>
            <person name="Whitehead S."/>
            <person name="Barrell B.G."/>
        </authorList>
    </citation>
    <scope>NUCLEOTIDE SEQUENCE [LARGE SCALE GENOMIC DNA]</scope>
    <source>
        <strain>CO-92 / Biovar Orientalis</strain>
    </source>
</reference>
<reference key="2">
    <citation type="journal article" date="2002" name="J. Bacteriol.">
        <title>Genome sequence of Yersinia pestis KIM.</title>
        <authorList>
            <person name="Deng W."/>
            <person name="Burland V."/>
            <person name="Plunkett G. III"/>
            <person name="Boutin A."/>
            <person name="Mayhew G.F."/>
            <person name="Liss P."/>
            <person name="Perna N.T."/>
            <person name="Rose D.J."/>
            <person name="Mau B."/>
            <person name="Zhou S."/>
            <person name="Schwartz D.C."/>
            <person name="Fetherston J.D."/>
            <person name="Lindler L.E."/>
            <person name="Brubaker R.R."/>
            <person name="Plano G.V."/>
            <person name="Straley S.C."/>
            <person name="McDonough K.A."/>
            <person name="Nilles M.L."/>
            <person name="Matson J.S."/>
            <person name="Blattner F.R."/>
            <person name="Perry R.D."/>
        </authorList>
    </citation>
    <scope>NUCLEOTIDE SEQUENCE [LARGE SCALE GENOMIC DNA]</scope>
    <source>
        <strain>KIM10+ / Biovar Mediaevalis</strain>
    </source>
</reference>
<reference key="3">
    <citation type="journal article" date="2004" name="DNA Res.">
        <title>Complete genome sequence of Yersinia pestis strain 91001, an isolate avirulent to humans.</title>
        <authorList>
            <person name="Song Y."/>
            <person name="Tong Z."/>
            <person name="Wang J."/>
            <person name="Wang L."/>
            <person name="Guo Z."/>
            <person name="Han Y."/>
            <person name="Zhang J."/>
            <person name="Pei D."/>
            <person name="Zhou D."/>
            <person name="Qin H."/>
            <person name="Pang X."/>
            <person name="Han Y."/>
            <person name="Zhai J."/>
            <person name="Li M."/>
            <person name="Cui B."/>
            <person name="Qi Z."/>
            <person name="Jin L."/>
            <person name="Dai R."/>
            <person name="Chen F."/>
            <person name="Li S."/>
            <person name="Ye C."/>
            <person name="Du Z."/>
            <person name="Lin W."/>
            <person name="Wang J."/>
            <person name="Yu J."/>
            <person name="Yang H."/>
            <person name="Wang J."/>
            <person name="Huang P."/>
            <person name="Yang R."/>
        </authorList>
    </citation>
    <scope>NUCLEOTIDE SEQUENCE [LARGE SCALE GENOMIC DNA]</scope>
    <source>
        <strain>91001 / Biovar Mediaevalis</strain>
    </source>
</reference>